<gene>
    <name evidence="2" type="primary">smpB</name>
    <name type="synonym">smqB</name>
    <name type="ordered locus">Z3913</name>
    <name type="ordered locus">ECs3482</name>
</gene>
<accession>P0A834</accession>
<accession>P32052</accession>
<accession>P77011</accession>
<reference key="1">
    <citation type="journal article" date="2001" name="Nature">
        <title>Genome sequence of enterohaemorrhagic Escherichia coli O157:H7.</title>
        <authorList>
            <person name="Perna N.T."/>
            <person name="Plunkett G. III"/>
            <person name="Burland V."/>
            <person name="Mau B."/>
            <person name="Glasner J.D."/>
            <person name="Rose D.J."/>
            <person name="Mayhew G.F."/>
            <person name="Evans P.S."/>
            <person name="Gregor J."/>
            <person name="Kirkpatrick H.A."/>
            <person name="Posfai G."/>
            <person name="Hackett J."/>
            <person name="Klink S."/>
            <person name="Boutin A."/>
            <person name="Shao Y."/>
            <person name="Miller L."/>
            <person name="Grotbeck E.J."/>
            <person name="Davis N.W."/>
            <person name="Lim A."/>
            <person name="Dimalanta E.T."/>
            <person name="Potamousis K."/>
            <person name="Apodaca J."/>
            <person name="Anantharaman T.S."/>
            <person name="Lin J."/>
            <person name="Yen G."/>
            <person name="Schwartz D.C."/>
            <person name="Welch R.A."/>
            <person name="Blattner F.R."/>
        </authorList>
    </citation>
    <scope>NUCLEOTIDE SEQUENCE [LARGE SCALE GENOMIC DNA]</scope>
    <source>
        <strain>O157:H7 / EDL933 / ATCC 700927 / EHEC</strain>
    </source>
</reference>
<reference key="2">
    <citation type="journal article" date="2001" name="DNA Res.">
        <title>Complete genome sequence of enterohemorrhagic Escherichia coli O157:H7 and genomic comparison with a laboratory strain K-12.</title>
        <authorList>
            <person name="Hayashi T."/>
            <person name="Makino K."/>
            <person name="Ohnishi M."/>
            <person name="Kurokawa K."/>
            <person name="Ishii K."/>
            <person name="Yokoyama K."/>
            <person name="Han C.-G."/>
            <person name="Ohtsubo E."/>
            <person name="Nakayama K."/>
            <person name="Murata T."/>
            <person name="Tanaka M."/>
            <person name="Tobe T."/>
            <person name="Iida T."/>
            <person name="Takami H."/>
            <person name="Honda T."/>
            <person name="Sasakawa C."/>
            <person name="Ogasawara N."/>
            <person name="Yasunaga T."/>
            <person name="Kuhara S."/>
            <person name="Shiba T."/>
            <person name="Hattori M."/>
            <person name="Shinagawa H."/>
        </authorList>
    </citation>
    <scope>NUCLEOTIDE SEQUENCE [LARGE SCALE GENOMIC DNA]</scope>
    <source>
        <strain>O157:H7 / Sakai / RIMD 0509952 / EHEC</strain>
    </source>
</reference>
<organism>
    <name type="scientific">Escherichia coli O157:H7</name>
    <dbReference type="NCBI Taxonomy" id="83334"/>
    <lineage>
        <taxon>Bacteria</taxon>
        <taxon>Pseudomonadati</taxon>
        <taxon>Pseudomonadota</taxon>
        <taxon>Gammaproteobacteria</taxon>
        <taxon>Enterobacterales</taxon>
        <taxon>Enterobacteriaceae</taxon>
        <taxon>Escherichia</taxon>
    </lineage>
</organism>
<protein>
    <recommendedName>
        <fullName evidence="2">SsrA-binding protein</fullName>
    </recommendedName>
    <alternativeName>
        <fullName evidence="2">Small protein B</fullName>
    </alternativeName>
</protein>
<keyword id="KW-0963">Cytoplasm</keyword>
<keyword id="KW-1185">Reference proteome</keyword>
<keyword id="KW-0694">RNA-binding</keyword>
<feature type="initiator methionine" description="Removed" evidence="1">
    <location>
        <position position="1"/>
    </location>
</feature>
<feature type="chain" id="PRO_0000102945" description="SsrA-binding protein">
    <location>
        <begin position="2"/>
        <end position="160"/>
    </location>
</feature>
<evidence type="ECO:0000250" key="1"/>
<evidence type="ECO:0000255" key="2">
    <source>
        <dbReference type="HAMAP-Rule" id="MF_00023"/>
    </source>
</evidence>
<sequence>MTKKKAHKPGSATIALNKRARHEYFIEEEFEAGLALQGWEVKSLRAGKANISDSYVLLRDGEAFLFGANITPMAVASTHVVCDPTRTRKLLLNQRELDSLYGRVNREGYTVVALSLYWKNAWCKVKIGVAKGKKQHDKRSDIKEREWQVDKARIMKNAHR</sequence>
<comment type="function">
    <text evidence="2">Required for rescue of stalled ribosomes mediated by trans-translation. Binds to transfer-messenger RNA (tmRNA), required for stable association of tmRNA with ribosomes. tmRNA and SmpB together mimic tRNA shape, replacing the anticodon stem-loop with SmpB. tmRNA is encoded by the ssrA gene; the 2 termini fold to resemble tRNA(Ala) and it encodes a 'tag peptide', a short internal open reading frame. During trans-translation Ala-aminoacylated tmRNA acts like a tRNA, entering the A-site of stalled ribosomes, displacing the stalled mRNA. The ribosome then switches to translate the ORF on the tmRNA; the nascent peptide is terminated with the 'tag peptide' encoded by the tmRNA and targeted for degradation. The ribosome is freed to recommence translation, which seems to be the essential function of trans-translation.</text>
</comment>
<comment type="subcellular location">
    <subcellularLocation>
        <location evidence="2">Cytoplasm</location>
    </subcellularLocation>
    <text evidence="2">The tmRNA-SmpB complex associates with stalled 70S ribosomes.</text>
</comment>
<comment type="similarity">
    <text evidence="2">Belongs to the SmpB family.</text>
</comment>
<dbReference type="EMBL" id="AE005174">
    <property type="protein sequence ID" value="AAG57730.1"/>
    <property type="molecule type" value="Genomic_DNA"/>
</dbReference>
<dbReference type="EMBL" id="BA000007">
    <property type="protein sequence ID" value="BAB36905.1"/>
    <property type="molecule type" value="Genomic_DNA"/>
</dbReference>
<dbReference type="PIR" id="B91064">
    <property type="entry name" value="B91064"/>
</dbReference>
<dbReference type="RefSeq" id="NP_311509.1">
    <property type="nucleotide sequence ID" value="NC_002695.1"/>
</dbReference>
<dbReference type="RefSeq" id="WP_000162574.1">
    <property type="nucleotide sequence ID" value="NZ_VOAI01000040.1"/>
</dbReference>
<dbReference type="SMR" id="P0A834"/>
<dbReference type="STRING" id="155864.Z3913"/>
<dbReference type="GeneID" id="914806"/>
<dbReference type="GeneID" id="93774470"/>
<dbReference type="KEGG" id="ece:Z3913"/>
<dbReference type="KEGG" id="ecs:ECs_3482"/>
<dbReference type="PATRIC" id="fig|386585.9.peg.3637"/>
<dbReference type="eggNOG" id="COG0691">
    <property type="taxonomic scope" value="Bacteria"/>
</dbReference>
<dbReference type="HOGENOM" id="CLU_108953_3_0_6"/>
<dbReference type="OMA" id="WTNHSAR"/>
<dbReference type="Proteomes" id="UP000000558">
    <property type="component" value="Chromosome"/>
</dbReference>
<dbReference type="Proteomes" id="UP000002519">
    <property type="component" value="Chromosome"/>
</dbReference>
<dbReference type="GO" id="GO:0005829">
    <property type="term" value="C:cytosol"/>
    <property type="evidence" value="ECO:0007669"/>
    <property type="project" value="TreeGrafter"/>
</dbReference>
<dbReference type="GO" id="GO:0003723">
    <property type="term" value="F:RNA binding"/>
    <property type="evidence" value="ECO:0007669"/>
    <property type="project" value="UniProtKB-UniRule"/>
</dbReference>
<dbReference type="GO" id="GO:0070929">
    <property type="term" value="P:trans-translation"/>
    <property type="evidence" value="ECO:0007669"/>
    <property type="project" value="UniProtKB-UniRule"/>
</dbReference>
<dbReference type="CDD" id="cd09294">
    <property type="entry name" value="SmpB"/>
    <property type="match status" value="1"/>
</dbReference>
<dbReference type="FunFam" id="2.40.280.10:FF:000001">
    <property type="entry name" value="SsrA-binding protein"/>
    <property type="match status" value="1"/>
</dbReference>
<dbReference type="Gene3D" id="2.40.280.10">
    <property type="match status" value="1"/>
</dbReference>
<dbReference type="HAMAP" id="MF_00023">
    <property type="entry name" value="SmpB"/>
    <property type="match status" value="1"/>
</dbReference>
<dbReference type="InterPro" id="IPR023620">
    <property type="entry name" value="SmpB"/>
</dbReference>
<dbReference type="InterPro" id="IPR000037">
    <property type="entry name" value="SsrA-bd_prot"/>
</dbReference>
<dbReference type="InterPro" id="IPR020081">
    <property type="entry name" value="SsrA-bd_prot_CS"/>
</dbReference>
<dbReference type="NCBIfam" id="NF003843">
    <property type="entry name" value="PRK05422.1"/>
    <property type="match status" value="1"/>
</dbReference>
<dbReference type="NCBIfam" id="TIGR00086">
    <property type="entry name" value="smpB"/>
    <property type="match status" value="1"/>
</dbReference>
<dbReference type="PANTHER" id="PTHR30308:SF2">
    <property type="entry name" value="SSRA-BINDING PROTEIN"/>
    <property type="match status" value="1"/>
</dbReference>
<dbReference type="PANTHER" id="PTHR30308">
    <property type="entry name" value="TMRNA-BINDING COMPONENT OF TRANS-TRANSLATION TAGGING COMPLEX"/>
    <property type="match status" value="1"/>
</dbReference>
<dbReference type="Pfam" id="PF01668">
    <property type="entry name" value="SmpB"/>
    <property type="match status" value="1"/>
</dbReference>
<dbReference type="SUPFAM" id="SSF74982">
    <property type="entry name" value="Small protein B (SmpB)"/>
    <property type="match status" value="1"/>
</dbReference>
<dbReference type="PROSITE" id="PS01317">
    <property type="entry name" value="SSRP"/>
    <property type="match status" value="1"/>
</dbReference>
<proteinExistence type="inferred from homology"/>
<name>SSRP_ECO57</name>